<gene>
    <name type="ordered locus">lmo0363</name>
</gene>
<reference key="1">
    <citation type="journal article" date="2001" name="Science">
        <title>Comparative genomics of Listeria species.</title>
        <authorList>
            <person name="Glaser P."/>
            <person name="Frangeul L."/>
            <person name="Buchrieser C."/>
            <person name="Rusniok C."/>
            <person name="Amend A."/>
            <person name="Baquero F."/>
            <person name="Berche P."/>
            <person name="Bloecker H."/>
            <person name="Brandt P."/>
            <person name="Chakraborty T."/>
            <person name="Charbit A."/>
            <person name="Chetouani F."/>
            <person name="Couve E."/>
            <person name="de Daruvar A."/>
            <person name="Dehoux P."/>
            <person name="Domann E."/>
            <person name="Dominguez-Bernal G."/>
            <person name="Duchaud E."/>
            <person name="Durant L."/>
            <person name="Dussurget O."/>
            <person name="Entian K.-D."/>
            <person name="Fsihi H."/>
            <person name="Garcia-del Portillo F."/>
            <person name="Garrido P."/>
            <person name="Gautier L."/>
            <person name="Goebel W."/>
            <person name="Gomez-Lopez N."/>
            <person name="Hain T."/>
            <person name="Hauf J."/>
            <person name="Jackson D."/>
            <person name="Jones L.-M."/>
            <person name="Kaerst U."/>
            <person name="Kreft J."/>
            <person name="Kuhn M."/>
            <person name="Kunst F."/>
            <person name="Kurapkat G."/>
            <person name="Madueno E."/>
            <person name="Maitournam A."/>
            <person name="Mata Vicente J."/>
            <person name="Ng E."/>
            <person name="Nedjari H."/>
            <person name="Nordsiek G."/>
            <person name="Novella S."/>
            <person name="de Pablos B."/>
            <person name="Perez-Diaz J.-C."/>
            <person name="Purcell R."/>
            <person name="Remmel B."/>
            <person name="Rose M."/>
            <person name="Schlueter T."/>
            <person name="Simoes N."/>
            <person name="Tierrez A."/>
            <person name="Vazquez-Boland J.-A."/>
            <person name="Voss H."/>
            <person name="Wehland J."/>
            <person name="Cossart P."/>
        </authorList>
    </citation>
    <scope>NUCLEOTIDE SEQUENCE [LARGE SCALE GENOMIC DNA]</scope>
    <source>
        <strain>ATCC BAA-679 / EGD-e</strain>
    </source>
</reference>
<accession>P58495</accession>
<feature type="chain" id="PRO_0000209969" description="Uncharacterized peptidase Lmo0363">
    <location>
        <begin position="1"/>
        <end position="205"/>
    </location>
</feature>
<feature type="active site" description="Charge relay system" evidence="1">
    <location>
        <position position="119"/>
    </location>
</feature>
<feature type="active site" description="Charge relay system" evidence="1">
    <location>
        <position position="160"/>
    </location>
</feature>
<feature type="strand" evidence="3">
    <location>
        <begin position="3"/>
        <end position="8"/>
    </location>
</feature>
<feature type="helix" evidence="3">
    <location>
        <begin position="10"/>
        <end position="12"/>
    </location>
</feature>
<feature type="helix" evidence="3">
    <location>
        <begin position="14"/>
        <end position="20"/>
    </location>
</feature>
<feature type="strand" evidence="3">
    <location>
        <begin position="28"/>
        <end position="32"/>
    </location>
</feature>
<feature type="helix" evidence="3">
    <location>
        <begin position="34"/>
        <end position="38"/>
    </location>
</feature>
<feature type="helix" evidence="3">
    <location>
        <begin position="43"/>
        <end position="54"/>
    </location>
</feature>
<feature type="strand" evidence="3">
    <location>
        <begin position="58"/>
        <end position="61"/>
    </location>
</feature>
<feature type="turn" evidence="3">
    <location>
        <begin position="64"/>
        <end position="66"/>
    </location>
</feature>
<feature type="helix" evidence="3">
    <location>
        <begin position="69"/>
        <end position="78"/>
    </location>
</feature>
<feature type="strand" evidence="3">
    <location>
        <begin position="79"/>
        <end position="84"/>
    </location>
</feature>
<feature type="helix" evidence="3">
    <location>
        <begin position="89"/>
        <end position="98"/>
    </location>
</feature>
<feature type="helix" evidence="3">
    <location>
        <begin position="101"/>
        <end position="110"/>
    </location>
</feature>
<feature type="strand" evidence="3">
    <location>
        <begin position="114"/>
        <end position="118"/>
    </location>
</feature>
<feature type="helix" evidence="3">
    <location>
        <begin position="120"/>
        <end position="123"/>
    </location>
</feature>
<feature type="strand" evidence="3">
    <location>
        <begin position="126"/>
        <end position="128"/>
    </location>
</feature>
<feature type="helix" evidence="3">
    <location>
        <begin position="130"/>
        <end position="132"/>
    </location>
</feature>
<feature type="turn" evidence="3">
    <location>
        <begin position="133"/>
        <end position="135"/>
    </location>
</feature>
<feature type="helix" evidence="3">
    <location>
        <begin position="138"/>
        <end position="140"/>
    </location>
</feature>
<feature type="strand" evidence="3">
    <location>
        <begin position="153"/>
        <end position="158"/>
    </location>
</feature>
<feature type="turn" evidence="3">
    <location>
        <begin position="159"/>
        <end position="162"/>
    </location>
</feature>
<feature type="helix" evidence="3">
    <location>
        <begin position="167"/>
        <end position="176"/>
    </location>
</feature>
<feature type="strand" evidence="3">
    <location>
        <begin position="183"/>
        <end position="185"/>
    </location>
</feature>
<feature type="strand" evidence="3">
    <location>
        <begin position="190"/>
        <end position="195"/>
    </location>
</feature>
<feature type="strand" evidence="3">
    <location>
        <begin position="198"/>
        <end position="203"/>
    </location>
</feature>
<proteinExistence type="evidence at protein level"/>
<dbReference type="EC" id="3.4.21.-"/>
<dbReference type="EMBL" id="AL591975">
    <property type="protein sequence ID" value="CAC98442.1"/>
    <property type="molecule type" value="Genomic_DNA"/>
</dbReference>
<dbReference type="PIR" id="AD1120">
    <property type="entry name" value="AD1120"/>
</dbReference>
<dbReference type="RefSeq" id="NP_463893.1">
    <property type="nucleotide sequence ID" value="NC_003210.1"/>
</dbReference>
<dbReference type="RefSeq" id="WP_003723214.1">
    <property type="nucleotide sequence ID" value="NZ_CP149495.1"/>
</dbReference>
<dbReference type="PDB" id="3L4E">
    <property type="method" value="X-ray"/>
    <property type="resolution" value="1.50 A"/>
    <property type="chains" value="A=1-205"/>
</dbReference>
<dbReference type="PDBsum" id="3L4E"/>
<dbReference type="SMR" id="P58495"/>
<dbReference type="STRING" id="169963.gene:17593014"/>
<dbReference type="PaxDb" id="169963-lmo0363"/>
<dbReference type="EnsemblBacteria" id="CAC98442">
    <property type="protein sequence ID" value="CAC98442"/>
    <property type="gene ID" value="CAC98442"/>
</dbReference>
<dbReference type="GeneID" id="987612"/>
<dbReference type="KEGG" id="lmo:lmo0363"/>
<dbReference type="PATRIC" id="fig|169963.11.peg.374"/>
<dbReference type="eggNOG" id="COG3340">
    <property type="taxonomic scope" value="Bacteria"/>
</dbReference>
<dbReference type="HOGENOM" id="CLU_090997_0_0_9"/>
<dbReference type="OrthoDB" id="9778515at2"/>
<dbReference type="PhylomeDB" id="P58495"/>
<dbReference type="BioCyc" id="LMON169963:LMO0363-MONOMER"/>
<dbReference type="EvolutionaryTrace" id="P58495"/>
<dbReference type="Proteomes" id="UP000000817">
    <property type="component" value="Chromosome"/>
</dbReference>
<dbReference type="GO" id="GO:0008236">
    <property type="term" value="F:serine-type peptidase activity"/>
    <property type="evidence" value="ECO:0007669"/>
    <property type="project" value="UniProtKB-KW"/>
</dbReference>
<dbReference type="GO" id="GO:0006508">
    <property type="term" value="P:proteolysis"/>
    <property type="evidence" value="ECO:0007669"/>
    <property type="project" value="UniProtKB-KW"/>
</dbReference>
<dbReference type="FunFam" id="3.40.50.880:FF:000094">
    <property type="entry name" value="Uncharacterized peptidase Lmo0363"/>
    <property type="match status" value="1"/>
</dbReference>
<dbReference type="Gene3D" id="3.40.50.880">
    <property type="match status" value="1"/>
</dbReference>
<dbReference type="InterPro" id="IPR029062">
    <property type="entry name" value="Class_I_gatase-like"/>
</dbReference>
<dbReference type="InterPro" id="IPR005320">
    <property type="entry name" value="Peptidase_S51"/>
</dbReference>
<dbReference type="PANTHER" id="PTHR20842:SF0">
    <property type="entry name" value="ALPHA-ASPARTYL DIPEPTIDASE"/>
    <property type="match status" value="1"/>
</dbReference>
<dbReference type="PANTHER" id="PTHR20842">
    <property type="entry name" value="PROTEASE S51 ALPHA-ASPARTYL DIPEPTIDASE"/>
    <property type="match status" value="1"/>
</dbReference>
<dbReference type="Pfam" id="PF03575">
    <property type="entry name" value="Peptidase_S51"/>
    <property type="match status" value="1"/>
</dbReference>
<dbReference type="SUPFAM" id="SSF52317">
    <property type="entry name" value="Class I glutamine amidotransferase-like"/>
    <property type="match status" value="1"/>
</dbReference>
<evidence type="ECO:0000250" key="1"/>
<evidence type="ECO:0000305" key="2"/>
<evidence type="ECO:0007829" key="3">
    <source>
        <dbReference type="PDB" id="3L4E"/>
    </source>
</evidence>
<keyword id="KW-0002">3D-structure</keyword>
<keyword id="KW-0378">Hydrolase</keyword>
<keyword id="KW-0645">Protease</keyword>
<keyword id="KW-1185">Reference proteome</keyword>
<keyword id="KW-0720">Serine protease</keyword>
<protein>
    <recommendedName>
        <fullName>Uncharacterized peptidase Lmo0363</fullName>
        <ecNumber>3.4.21.-</ecNumber>
    </recommendedName>
</protein>
<sequence>MKNLFLTSSFKDVVPLFTEFESNLQGKTVTFIPTASTVEEVTFYVEAGKKALESLGLLVEELDIATESLGEITTKLRKNDFIYVTGGNTFFLLQELKRTGADKLILEEIAAGKLYIGESAGAVITSPNIAYIQTMDSTKKAVNLTNYDALNLVDFSTLPHYNNTPFKEITQKIVTEYAGKSQIYPISNHEAIFIRGKEVITKRLS</sequence>
<organism>
    <name type="scientific">Listeria monocytogenes serovar 1/2a (strain ATCC BAA-679 / EGD-e)</name>
    <dbReference type="NCBI Taxonomy" id="169963"/>
    <lineage>
        <taxon>Bacteria</taxon>
        <taxon>Bacillati</taxon>
        <taxon>Bacillota</taxon>
        <taxon>Bacilli</taxon>
        <taxon>Bacillales</taxon>
        <taxon>Listeriaceae</taxon>
        <taxon>Listeria</taxon>
    </lineage>
</organism>
<comment type="similarity">
    <text evidence="2">Belongs to the peptidase S51 family.</text>
</comment>
<name>Y363_LISMO</name>